<name>DAPE_METC4</name>
<organism>
    <name type="scientific">Methylorubrum extorquens (strain CM4 / NCIMB 13688)</name>
    <name type="common">Methylobacterium extorquens</name>
    <dbReference type="NCBI Taxonomy" id="440085"/>
    <lineage>
        <taxon>Bacteria</taxon>
        <taxon>Pseudomonadati</taxon>
        <taxon>Pseudomonadota</taxon>
        <taxon>Alphaproteobacteria</taxon>
        <taxon>Hyphomicrobiales</taxon>
        <taxon>Methylobacteriaceae</taxon>
        <taxon>Methylorubrum</taxon>
    </lineage>
</organism>
<accession>B7KVW2</accession>
<feature type="chain" id="PRO_0000375612" description="Succinyl-diaminopimelate desuccinylase">
    <location>
        <begin position="1"/>
        <end position="385"/>
    </location>
</feature>
<feature type="active site" evidence="1">
    <location>
        <position position="75"/>
    </location>
</feature>
<feature type="active site" description="Proton acceptor" evidence="1">
    <location>
        <position position="141"/>
    </location>
</feature>
<feature type="binding site" evidence="1">
    <location>
        <position position="73"/>
    </location>
    <ligand>
        <name>Zn(2+)</name>
        <dbReference type="ChEBI" id="CHEBI:29105"/>
        <label>1</label>
    </ligand>
</feature>
<feature type="binding site" evidence="1">
    <location>
        <position position="106"/>
    </location>
    <ligand>
        <name>Zn(2+)</name>
        <dbReference type="ChEBI" id="CHEBI:29105"/>
        <label>1</label>
    </ligand>
</feature>
<feature type="binding site" evidence="1">
    <location>
        <position position="106"/>
    </location>
    <ligand>
        <name>Zn(2+)</name>
        <dbReference type="ChEBI" id="CHEBI:29105"/>
        <label>2</label>
    </ligand>
</feature>
<feature type="binding site" evidence="1">
    <location>
        <position position="142"/>
    </location>
    <ligand>
        <name>Zn(2+)</name>
        <dbReference type="ChEBI" id="CHEBI:29105"/>
        <label>2</label>
    </ligand>
</feature>
<feature type="binding site" evidence="1">
    <location>
        <position position="170"/>
    </location>
    <ligand>
        <name>Zn(2+)</name>
        <dbReference type="ChEBI" id="CHEBI:29105"/>
        <label>1</label>
    </ligand>
</feature>
<feature type="binding site" evidence="1">
    <location>
        <position position="359"/>
    </location>
    <ligand>
        <name>Zn(2+)</name>
        <dbReference type="ChEBI" id="CHEBI:29105"/>
        <label>2</label>
    </ligand>
</feature>
<reference key="1">
    <citation type="submission" date="2008-12" db="EMBL/GenBank/DDBJ databases">
        <title>Complete sequence of chromosome of Methylobacterium chloromethanicum CM4.</title>
        <authorList>
            <consortium name="US DOE Joint Genome Institute"/>
            <person name="Lucas S."/>
            <person name="Copeland A."/>
            <person name="Lapidus A."/>
            <person name="Glavina del Rio T."/>
            <person name="Dalin E."/>
            <person name="Tice H."/>
            <person name="Bruce D."/>
            <person name="Goodwin L."/>
            <person name="Pitluck S."/>
            <person name="Chertkov O."/>
            <person name="Brettin T."/>
            <person name="Detter J.C."/>
            <person name="Han C."/>
            <person name="Larimer F."/>
            <person name="Land M."/>
            <person name="Hauser L."/>
            <person name="Kyrpides N."/>
            <person name="Mikhailova N."/>
            <person name="Marx C."/>
            <person name="Richardson P."/>
        </authorList>
    </citation>
    <scope>NUCLEOTIDE SEQUENCE [LARGE SCALE GENOMIC DNA]</scope>
    <source>
        <strain>CM4 / NCIMB 13688</strain>
    </source>
</reference>
<gene>
    <name evidence="1" type="primary">dapE</name>
    <name type="ordered locus">Mchl_1915</name>
</gene>
<comment type="function">
    <text evidence="1">Catalyzes the hydrolysis of N-succinyl-L,L-diaminopimelic acid (SDAP), forming succinate and LL-2,6-diaminopimelate (DAP), an intermediate involved in the bacterial biosynthesis of lysine and meso-diaminopimelic acid, an essential component of bacterial cell walls.</text>
</comment>
<comment type="catalytic activity">
    <reaction evidence="1">
        <text>N-succinyl-(2S,6S)-2,6-diaminopimelate + H2O = (2S,6S)-2,6-diaminopimelate + succinate</text>
        <dbReference type="Rhea" id="RHEA:22608"/>
        <dbReference type="ChEBI" id="CHEBI:15377"/>
        <dbReference type="ChEBI" id="CHEBI:30031"/>
        <dbReference type="ChEBI" id="CHEBI:57609"/>
        <dbReference type="ChEBI" id="CHEBI:58087"/>
        <dbReference type="EC" id="3.5.1.18"/>
    </reaction>
</comment>
<comment type="cofactor">
    <cofactor evidence="1">
        <name>Zn(2+)</name>
        <dbReference type="ChEBI" id="CHEBI:29105"/>
    </cofactor>
    <cofactor evidence="1">
        <name>Co(2+)</name>
        <dbReference type="ChEBI" id="CHEBI:48828"/>
    </cofactor>
    <text evidence="1">Binds 2 Zn(2+) or Co(2+) ions per subunit.</text>
</comment>
<comment type="pathway">
    <text evidence="1">Amino-acid biosynthesis; L-lysine biosynthesis via DAP pathway; LL-2,6-diaminopimelate from (S)-tetrahydrodipicolinate (succinylase route): step 3/3.</text>
</comment>
<comment type="subunit">
    <text evidence="1">Homodimer.</text>
</comment>
<comment type="similarity">
    <text evidence="1">Belongs to the peptidase M20A family. DapE subfamily.</text>
</comment>
<comment type="sequence caution" evidence="2">
    <conflict type="erroneous initiation">
        <sequence resource="EMBL-CDS" id="ACK82778"/>
    </conflict>
</comment>
<evidence type="ECO:0000255" key="1">
    <source>
        <dbReference type="HAMAP-Rule" id="MF_01690"/>
    </source>
</evidence>
<evidence type="ECO:0000305" key="2"/>
<dbReference type="EC" id="3.5.1.18" evidence="1"/>
<dbReference type="EMBL" id="CP001298">
    <property type="protein sequence ID" value="ACK82778.1"/>
    <property type="status" value="ALT_INIT"/>
    <property type="molecule type" value="Genomic_DNA"/>
</dbReference>
<dbReference type="RefSeq" id="WP_015950517.1">
    <property type="nucleotide sequence ID" value="NC_011757.1"/>
</dbReference>
<dbReference type="SMR" id="B7KVW2"/>
<dbReference type="KEGG" id="mch:Mchl_1915"/>
<dbReference type="HOGENOM" id="CLU_021802_4_0_5"/>
<dbReference type="UniPathway" id="UPA00034">
    <property type="reaction ID" value="UER00021"/>
</dbReference>
<dbReference type="Proteomes" id="UP000002385">
    <property type="component" value="Chromosome"/>
</dbReference>
<dbReference type="GO" id="GO:0008777">
    <property type="term" value="F:acetylornithine deacetylase activity"/>
    <property type="evidence" value="ECO:0007669"/>
    <property type="project" value="TreeGrafter"/>
</dbReference>
<dbReference type="GO" id="GO:0050897">
    <property type="term" value="F:cobalt ion binding"/>
    <property type="evidence" value="ECO:0007669"/>
    <property type="project" value="UniProtKB-UniRule"/>
</dbReference>
<dbReference type="GO" id="GO:0009014">
    <property type="term" value="F:succinyl-diaminopimelate desuccinylase activity"/>
    <property type="evidence" value="ECO:0007669"/>
    <property type="project" value="UniProtKB-UniRule"/>
</dbReference>
<dbReference type="GO" id="GO:0008270">
    <property type="term" value="F:zinc ion binding"/>
    <property type="evidence" value="ECO:0007669"/>
    <property type="project" value="UniProtKB-UniRule"/>
</dbReference>
<dbReference type="GO" id="GO:0019877">
    <property type="term" value="P:diaminopimelate biosynthetic process"/>
    <property type="evidence" value="ECO:0007669"/>
    <property type="project" value="UniProtKB-UniRule"/>
</dbReference>
<dbReference type="GO" id="GO:0006526">
    <property type="term" value="P:L-arginine biosynthetic process"/>
    <property type="evidence" value="ECO:0007669"/>
    <property type="project" value="TreeGrafter"/>
</dbReference>
<dbReference type="GO" id="GO:0009089">
    <property type="term" value="P:lysine biosynthetic process via diaminopimelate"/>
    <property type="evidence" value="ECO:0007669"/>
    <property type="project" value="UniProtKB-UniRule"/>
</dbReference>
<dbReference type="CDD" id="cd03891">
    <property type="entry name" value="M20_DapE_proteobac"/>
    <property type="match status" value="1"/>
</dbReference>
<dbReference type="Gene3D" id="3.40.630.10">
    <property type="entry name" value="Zn peptidases"/>
    <property type="match status" value="2"/>
</dbReference>
<dbReference type="HAMAP" id="MF_01690">
    <property type="entry name" value="DapE"/>
    <property type="match status" value="1"/>
</dbReference>
<dbReference type="InterPro" id="IPR001261">
    <property type="entry name" value="ArgE/DapE_CS"/>
</dbReference>
<dbReference type="InterPro" id="IPR036264">
    <property type="entry name" value="Bact_exopeptidase_dim_dom"/>
</dbReference>
<dbReference type="InterPro" id="IPR005941">
    <property type="entry name" value="DapE_proteobac"/>
</dbReference>
<dbReference type="InterPro" id="IPR002933">
    <property type="entry name" value="Peptidase_M20"/>
</dbReference>
<dbReference type="InterPro" id="IPR011650">
    <property type="entry name" value="Peptidase_M20_dimer"/>
</dbReference>
<dbReference type="InterPro" id="IPR050072">
    <property type="entry name" value="Peptidase_M20A"/>
</dbReference>
<dbReference type="NCBIfam" id="TIGR01246">
    <property type="entry name" value="dapE_proteo"/>
    <property type="match status" value="1"/>
</dbReference>
<dbReference type="NCBIfam" id="NF009557">
    <property type="entry name" value="PRK13009.1"/>
    <property type="match status" value="1"/>
</dbReference>
<dbReference type="PANTHER" id="PTHR43808">
    <property type="entry name" value="ACETYLORNITHINE DEACETYLASE"/>
    <property type="match status" value="1"/>
</dbReference>
<dbReference type="PANTHER" id="PTHR43808:SF31">
    <property type="entry name" value="N-ACETYL-L-CITRULLINE DEACETYLASE"/>
    <property type="match status" value="1"/>
</dbReference>
<dbReference type="Pfam" id="PF07687">
    <property type="entry name" value="M20_dimer"/>
    <property type="match status" value="1"/>
</dbReference>
<dbReference type="Pfam" id="PF01546">
    <property type="entry name" value="Peptidase_M20"/>
    <property type="match status" value="1"/>
</dbReference>
<dbReference type="SUPFAM" id="SSF55031">
    <property type="entry name" value="Bacterial exopeptidase dimerisation domain"/>
    <property type="match status" value="1"/>
</dbReference>
<dbReference type="SUPFAM" id="SSF53187">
    <property type="entry name" value="Zn-dependent exopeptidases"/>
    <property type="match status" value="1"/>
</dbReference>
<dbReference type="PROSITE" id="PS00759">
    <property type="entry name" value="ARGE_DAPE_CPG2_2"/>
    <property type="match status" value="1"/>
</dbReference>
<proteinExistence type="inferred from homology"/>
<keyword id="KW-0028">Amino-acid biosynthesis</keyword>
<keyword id="KW-0170">Cobalt</keyword>
<keyword id="KW-0220">Diaminopimelate biosynthesis</keyword>
<keyword id="KW-0378">Hydrolase</keyword>
<keyword id="KW-0457">Lysine biosynthesis</keyword>
<keyword id="KW-0479">Metal-binding</keyword>
<keyword id="KW-0862">Zinc</keyword>
<protein>
    <recommendedName>
        <fullName evidence="1">Succinyl-diaminopimelate desuccinylase</fullName>
        <shortName evidence="1">SDAP desuccinylase</shortName>
        <ecNumber evidence="1">3.5.1.18</ecNumber>
    </recommendedName>
    <alternativeName>
        <fullName evidence="1">N-succinyl-LL-2,6-diaminoheptanedioate amidohydrolase</fullName>
    </alternativeName>
</protein>
<sequence>MSDHSPLALAQALIRCPSVTPEEGGALSFLADRLSRAGFSVERPVFSEPGTPDIQNLYARIGTAGPVLVFAGHTDVVPPGETEAWTHGPFSGEVADGFLYGRGAVDMKGGIACMLAATLAFLDRHRPDFGGSIAFLVTGDEEGPAVNGTVKLLDWAKARGERFDHCLLGEPTNPDTLGEMIKIGRRGSLTGRITVHGRQGHVAYPHRAENPIPGLLRLASALTADPLDGGTAHFDASNLEFTTIDVGNPATNVIPASAKAVFNVRFNDDWTADTLGAEIRRRLEAAAGNAVRFSLDLQPSNSPAFLTQPDAFVDRVADAIEAETGRRPALSTTGGTSDARFIKDACPVIEFGLVGRTMHETDERVAVADLDRLTAIYGRVLDAYF</sequence>